<sequence length="176" mass="20795">MIDDDGYRPNVGIVICNRQGQVMWARRFGQHSWQFPQGGINPGESAEQAMYRELFEEVGLSRKDVRILASTRNWLRYKLPKRLVRWDTKPVCIGQKQKWFLLQLVSGDAEINMQTSSTPEFDGWRWVSYWYPVRQVVSFKRDVYRRVMKEFASVVMSLQENTPKPQNASAYRRKRG</sequence>
<gene>
    <name evidence="1" type="primary">rppH</name>
    <name evidence="1" type="synonym">nudH</name>
    <name type="ordered locus">ECS88_3125</name>
</gene>
<reference key="1">
    <citation type="journal article" date="2009" name="PLoS Genet.">
        <title>Organised genome dynamics in the Escherichia coli species results in highly diverse adaptive paths.</title>
        <authorList>
            <person name="Touchon M."/>
            <person name="Hoede C."/>
            <person name="Tenaillon O."/>
            <person name="Barbe V."/>
            <person name="Baeriswyl S."/>
            <person name="Bidet P."/>
            <person name="Bingen E."/>
            <person name="Bonacorsi S."/>
            <person name="Bouchier C."/>
            <person name="Bouvet O."/>
            <person name="Calteau A."/>
            <person name="Chiapello H."/>
            <person name="Clermont O."/>
            <person name="Cruveiller S."/>
            <person name="Danchin A."/>
            <person name="Diard M."/>
            <person name="Dossat C."/>
            <person name="Karoui M.E."/>
            <person name="Frapy E."/>
            <person name="Garry L."/>
            <person name="Ghigo J.M."/>
            <person name="Gilles A.M."/>
            <person name="Johnson J."/>
            <person name="Le Bouguenec C."/>
            <person name="Lescat M."/>
            <person name="Mangenot S."/>
            <person name="Martinez-Jehanne V."/>
            <person name="Matic I."/>
            <person name="Nassif X."/>
            <person name="Oztas S."/>
            <person name="Petit M.A."/>
            <person name="Pichon C."/>
            <person name="Rouy Z."/>
            <person name="Ruf C.S."/>
            <person name="Schneider D."/>
            <person name="Tourret J."/>
            <person name="Vacherie B."/>
            <person name="Vallenet D."/>
            <person name="Medigue C."/>
            <person name="Rocha E.P.C."/>
            <person name="Denamur E."/>
        </authorList>
    </citation>
    <scope>NUCLEOTIDE SEQUENCE [LARGE SCALE GENOMIC DNA]</scope>
    <source>
        <strain>S88 / ExPEC</strain>
    </source>
</reference>
<name>RPPH_ECO45</name>
<organism>
    <name type="scientific">Escherichia coli O45:K1 (strain S88 / ExPEC)</name>
    <dbReference type="NCBI Taxonomy" id="585035"/>
    <lineage>
        <taxon>Bacteria</taxon>
        <taxon>Pseudomonadati</taxon>
        <taxon>Pseudomonadota</taxon>
        <taxon>Gammaproteobacteria</taxon>
        <taxon>Enterobacterales</taxon>
        <taxon>Enterobacteriaceae</taxon>
        <taxon>Escherichia</taxon>
    </lineage>
</organism>
<accession>B7MLH6</accession>
<feature type="chain" id="PRO_1000119470" description="RNA pyrophosphohydrolase">
    <location>
        <begin position="1"/>
        <end position="176"/>
    </location>
</feature>
<feature type="domain" description="Nudix hydrolase" evidence="1">
    <location>
        <begin position="6"/>
        <end position="149"/>
    </location>
</feature>
<feature type="short sequence motif" description="Nudix box">
    <location>
        <begin position="38"/>
        <end position="59"/>
    </location>
</feature>
<proteinExistence type="inferred from homology"/>
<evidence type="ECO:0000255" key="1">
    <source>
        <dbReference type="HAMAP-Rule" id="MF_00298"/>
    </source>
</evidence>
<dbReference type="EC" id="3.6.1.-" evidence="1"/>
<dbReference type="EMBL" id="CU928161">
    <property type="protein sequence ID" value="CAR04365.1"/>
    <property type="molecule type" value="Genomic_DNA"/>
</dbReference>
<dbReference type="RefSeq" id="WP_000564489.1">
    <property type="nucleotide sequence ID" value="NC_011742.1"/>
</dbReference>
<dbReference type="SMR" id="B7MLH6"/>
<dbReference type="GeneID" id="75203778"/>
<dbReference type="KEGG" id="ecz:ECS88_3125"/>
<dbReference type="HOGENOM" id="CLU_087195_3_2_6"/>
<dbReference type="Proteomes" id="UP000000747">
    <property type="component" value="Chromosome"/>
</dbReference>
<dbReference type="GO" id="GO:0005737">
    <property type="term" value="C:cytoplasm"/>
    <property type="evidence" value="ECO:0007669"/>
    <property type="project" value="TreeGrafter"/>
</dbReference>
<dbReference type="GO" id="GO:0034353">
    <property type="term" value="F:mRNA 5'-diphosphatase activity"/>
    <property type="evidence" value="ECO:0007669"/>
    <property type="project" value="TreeGrafter"/>
</dbReference>
<dbReference type="GO" id="GO:0006402">
    <property type="term" value="P:mRNA catabolic process"/>
    <property type="evidence" value="ECO:0007669"/>
    <property type="project" value="TreeGrafter"/>
</dbReference>
<dbReference type="CDD" id="cd03671">
    <property type="entry name" value="NUDIX_Ap4A_hydrolase_plant_like"/>
    <property type="match status" value="1"/>
</dbReference>
<dbReference type="FunFam" id="3.90.79.10:FF:000001">
    <property type="entry name" value="RNA pyrophosphohydrolase"/>
    <property type="match status" value="1"/>
</dbReference>
<dbReference type="Gene3D" id="3.90.79.10">
    <property type="entry name" value="Nucleoside Triphosphate Pyrophosphohydrolase"/>
    <property type="match status" value="1"/>
</dbReference>
<dbReference type="HAMAP" id="MF_00298">
    <property type="entry name" value="Nudix_RppH"/>
    <property type="match status" value="1"/>
</dbReference>
<dbReference type="InterPro" id="IPR020476">
    <property type="entry name" value="Nudix_hydrolase"/>
</dbReference>
<dbReference type="InterPro" id="IPR015797">
    <property type="entry name" value="NUDIX_hydrolase-like_dom_sf"/>
</dbReference>
<dbReference type="InterPro" id="IPR020084">
    <property type="entry name" value="NUDIX_hydrolase_CS"/>
</dbReference>
<dbReference type="InterPro" id="IPR000086">
    <property type="entry name" value="NUDIX_hydrolase_dom"/>
</dbReference>
<dbReference type="InterPro" id="IPR022927">
    <property type="entry name" value="RppH"/>
</dbReference>
<dbReference type="NCBIfam" id="NF001934">
    <property type="entry name" value="PRK00714.1-1"/>
    <property type="match status" value="1"/>
</dbReference>
<dbReference type="NCBIfam" id="NF001937">
    <property type="entry name" value="PRK00714.1-4"/>
    <property type="match status" value="1"/>
</dbReference>
<dbReference type="NCBIfam" id="NF001938">
    <property type="entry name" value="PRK00714.1-5"/>
    <property type="match status" value="1"/>
</dbReference>
<dbReference type="PANTHER" id="PTHR23114">
    <property type="entry name" value="M7GPPPN-MRNA HYDROLASE"/>
    <property type="match status" value="1"/>
</dbReference>
<dbReference type="PANTHER" id="PTHR23114:SF17">
    <property type="entry name" value="M7GPPPN-MRNA HYDROLASE"/>
    <property type="match status" value="1"/>
</dbReference>
<dbReference type="Pfam" id="PF00293">
    <property type="entry name" value="NUDIX"/>
    <property type="match status" value="1"/>
</dbReference>
<dbReference type="PRINTS" id="PR00502">
    <property type="entry name" value="NUDIXFAMILY"/>
</dbReference>
<dbReference type="SUPFAM" id="SSF55811">
    <property type="entry name" value="Nudix"/>
    <property type="match status" value="1"/>
</dbReference>
<dbReference type="PROSITE" id="PS51462">
    <property type="entry name" value="NUDIX"/>
    <property type="match status" value="1"/>
</dbReference>
<dbReference type="PROSITE" id="PS00893">
    <property type="entry name" value="NUDIX_BOX"/>
    <property type="match status" value="1"/>
</dbReference>
<comment type="function">
    <text evidence="1">Accelerates the degradation of transcripts by removing pyrophosphate from the 5'-end of triphosphorylated RNA, leading to a more labile monophosphorylated state that can stimulate subsequent ribonuclease cleavage.</text>
</comment>
<comment type="cofactor">
    <cofactor evidence="1">
        <name>a divalent metal cation</name>
        <dbReference type="ChEBI" id="CHEBI:60240"/>
    </cofactor>
</comment>
<comment type="similarity">
    <text evidence="1">Belongs to the Nudix hydrolase family. RppH subfamily.</text>
</comment>
<keyword id="KW-0378">Hydrolase</keyword>
<keyword id="KW-1185">Reference proteome</keyword>
<protein>
    <recommendedName>
        <fullName evidence="1">RNA pyrophosphohydrolase</fullName>
        <ecNumber evidence="1">3.6.1.-</ecNumber>
    </recommendedName>
    <alternativeName>
        <fullName evidence="1">(Di)nucleoside polyphosphate hydrolase</fullName>
    </alternativeName>
</protein>